<proteinExistence type="predicted"/>
<name>Y321_METJA</name>
<evidence type="ECO:0000255" key="1"/>
<evidence type="ECO:0000305" key="2"/>
<comment type="subcellular location">
    <subcellularLocation>
        <location evidence="2">Cell membrane</location>
        <topology evidence="2">Multi-pass membrane protein</topology>
    </subcellularLocation>
</comment>
<feature type="chain" id="PRO_0000106792" description="Uncharacterized protein MJ0321">
    <location>
        <begin position="1"/>
        <end position="122"/>
    </location>
</feature>
<feature type="transmembrane region" description="Helical" evidence="1">
    <location>
        <begin position="7"/>
        <end position="27"/>
    </location>
</feature>
<feature type="transmembrane region" description="Helical" evidence="1">
    <location>
        <begin position="29"/>
        <end position="49"/>
    </location>
</feature>
<feature type="transmembrane region" description="Helical" evidence="1">
    <location>
        <begin position="62"/>
        <end position="82"/>
    </location>
</feature>
<feature type="transmembrane region" description="Helical" evidence="1">
    <location>
        <begin position="89"/>
        <end position="109"/>
    </location>
</feature>
<reference key="1">
    <citation type="journal article" date="1996" name="Science">
        <title>Complete genome sequence of the methanogenic archaeon, Methanococcus jannaschii.</title>
        <authorList>
            <person name="Bult C.J."/>
            <person name="White O."/>
            <person name="Olsen G.J."/>
            <person name="Zhou L."/>
            <person name="Fleischmann R.D."/>
            <person name="Sutton G.G."/>
            <person name="Blake J.A."/>
            <person name="FitzGerald L.M."/>
            <person name="Clayton R.A."/>
            <person name="Gocayne J.D."/>
            <person name="Kerlavage A.R."/>
            <person name="Dougherty B.A."/>
            <person name="Tomb J.-F."/>
            <person name="Adams M.D."/>
            <person name="Reich C.I."/>
            <person name="Overbeek R."/>
            <person name="Kirkness E.F."/>
            <person name="Weinstock K.G."/>
            <person name="Merrick J.M."/>
            <person name="Glodek A."/>
            <person name="Scott J.L."/>
            <person name="Geoghagen N.S.M."/>
            <person name="Weidman J.F."/>
            <person name="Fuhrmann J.L."/>
            <person name="Nguyen D."/>
            <person name="Utterback T.R."/>
            <person name="Kelley J.M."/>
            <person name="Peterson J.D."/>
            <person name="Sadow P.W."/>
            <person name="Hanna M.C."/>
            <person name="Cotton M.D."/>
            <person name="Roberts K.M."/>
            <person name="Hurst M.A."/>
            <person name="Kaine B.P."/>
            <person name="Borodovsky M."/>
            <person name="Klenk H.-P."/>
            <person name="Fraser C.M."/>
            <person name="Smith H.O."/>
            <person name="Woese C.R."/>
            <person name="Venter J.C."/>
        </authorList>
    </citation>
    <scope>NUCLEOTIDE SEQUENCE [LARGE SCALE GENOMIC DNA]</scope>
    <source>
        <strain>ATCC 43067 / DSM 2661 / JAL-1 / JCM 10045 / NBRC 100440</strain>
    </source>
</reference>
<organism>
    <name type="scientific">Methanocaldococcus jannaschii (strain ATCC 43067 / DSM 2661 / JAL-1 / JCM 10045 / NBRC 100440)</name>
    <name type="common">Methanococcus jannaschii</name>
    <dbReference type="NCBI Taxonomy" id="243232"/>
    <lineage>
        <taxon>Archaea</taxon>
        <taxon>Methanobacteriati</taxon>
        <taxon>Methanobacteriota</taxon>
        <taxon>Methanomada group</taxon>
        <taxon>Methanococci</taxon>
        <taxon>Methanococcales</taxon>
        <taxon>Methanocaldococcaceae</taxon>
        <taxon>Methanocaldococcus</taxon>
    </lineage>
</organism>
<keyword id="KW-1003">Cell membrane</keyword>
<keyword id="KW-0472">Membrane</keyword>
<keyword id="KW-1185">Reference proteome</keyword>
<keyword id="KW-0812">Transmembrane</keyword>
<keyword id="KW-1133">Transmembrane helix</keyword>
<gene>
    <name type="ordered locus">MJ0321</name>
</gene>
<accession>Q57769</accession>
<protein>
    <recommendedName>
        <fullName>Uncharacterized protein MJ0321</fullName>
    </recommendedName>
</protein>
<sequence length="122" mass="13504">MTNNDKIVAIVTSIAVICISLTVIFCDTLVLAVGVPTLVLLWLVFLGWINNKKLDKGEMRRAITGSIVIAFFIILIAISKNPDIYSNNKEIFSLFFGMVTTIIGYYFGYRSGKESKNSSGNE</sequence>
<dbReference type="EMBL" id="L77117">
    <property type="protein sequence ID" value="AAB98312.1"/>
    <property type="molecule type" value="Genomic_DNA"/>
</dbReference>
<dbReference type="PIR" id="B64340">
    <property type="entry name" value="B64340"/>
</dbReference>
<dbReference type="RefSeq" id="WP_010869819.1">
    <property type="nucleotide sequence ID" value="NC_000909.1"/>
</dbReference>
<dbReference type="STRING" id="243232.MJ_0321"/>
<dbReference type="PaxDb" id="243232-MJ_0321"/>
<dbReference type="EnsemblBacteria" id="AAB98312">
    <property type="protein sequence ID" value="AAB98312"/>
    <property type="gene ID" value="MJ_0321"/>
</dbReference>
<dbReference type="GeneID" id="1451176"/>
<dbReference type="KEGG" id="mja:MJ_0321"/>
<dbReference type="eggNOG" id="arCOG10171">
    <property type="taxonomic scope" value="Archaea"/>
</dbReference>
<dbReference type="HOGENOM" id="CLU_158396_0_0_2"/>
<dbReference type="InParanoid" id="Q57769"/>
<dbReference type="OrthoDB" id="99262at2157"/>
<dbReference type="Proteomes" id="UP000000805">
    <property type="component" value="Chromosome"/>
</dbReference>
<dbReference type="GO" id="GO:0005886">
    <property type="term" value="C:plasma membrane"/>
    <property type="evidence" value="ECO:0007669"/>
    <property type="project" value="UniProtKB-SubCell"/>
</dbReference>
<dbReference type="Gene3D" id="1.20.810.10">
    <property type="entry name" value="Cytochrome Bc1 Complex, Chain C"/>
    <property type="match status" value="1"/>
</dbReference>
<dbReference type="InterPro" id="IPR027387">
    <property type="entry name" value="Cytb/b6-like_sf"/>
</dbReference>